<name>ARLY_BRUA2</name>
<comment type="catalytic activity">
    <reaction evidence="1">
        <text>2-(N(omega)-L-arginino)succinate = fumarate + L-arginine</text>
        <dbReference type="Rhea" id="RHEA:24020"/>
        <dbReference type="ChEBI" id="CHEBI:29806"/>
        <dbReference type="ChEBI" id="CHEBI:32682"/>
        <dbReference type="ChEBI" id="CHEBI:57472"/>
        <dbReference type="EC" id="4.3.2.1"/>
    </reaction>
</comment>
<comment type="pathway">
    <text evidence="1">Amino-acid biosynthesis; L-arginine biosynthesis; L-arginine from L-ornithine and carbamoyl phosphate: step 3/3.</text>
</comment>
<comment type="subcellular location">
    <subcellularLocation>
        <location evidence="1">Cytoplasm</location>
    </subcellularLocation>
</comment>
<comment type="similarity">
    <text evidence="1">Belongs to the lyase 1 family. Argininosuccinate lyase subfamily.</text>
</comment>
<reference key="1">
    <citation type="journal article" date="2005" name="Infect. Immun.">
        <title>Whole-genome analyses of speciation events in pathogenic Brucellae.</title>
        <authorList>
            <person name="Chain P.S."/>
            <person name="Comerci D.J."/>
            <person name="Tolmasky M.E."/>
            <person name="Larimer F.W."/>
            <person name="Malfatti S.A."/>
            <person name="Vergez L.M."/>
            <person name="Aguero F."/>
            <person name="Land M.L."/>
            <person name="Ugalde R.A."/>
            <person name="Garcia E."/>
        </authorList>
    </citation>
    <scope>NUCLEOTIDE SEQUENCE [LARGE SCALE GENOMIC DNA]</scope>
    <source>
        <strain>2308</strain>
    </source>
</reference>
<organism>
    <name type="scientific">Brucella abortus (strain 2308)</name>
    <dbReference type="NCBI Taxonomy" id="359391"/>
    <lineage>
        <taxon>Bacteria</taxon>
        <taxon>Pseudomonadati</taxon>
        <taxon>Pseudomonadota</taxon>
        <taxon>Alphaproteobacteria</taxon>
        <taxon>Hyphomicrobiales</taxon>
        <taxon>Brucellaceae</taxon>
        <taxon>Brucella/Ochrobactrum group</taxon>
        <taxon>Brucella</taxon>
    </lineage>
</organism>
<feature type="chain" id="PRO_0000240717" description="Argininosuccinate lyase">
    <location>
        <begin position="1"/>
        <end position="466"/>
    </location>
</feature>
<gene>
    <name evidence="1" type="primary">argH</name>
    <name type="ordered locus">BAB1_1982</name>
</gene>
<proteinExistence type="inferred from homology"/>
<evidence type="ECO:0000255" key="1">
    <source>
        <dbReference type="HAMAP-Rule" id="MF_00006"/>
    </source>
</evidence>
<dbReference type="EC" id="4.3.2.1" evidence="1"/>
<dbReference type="EMBL" id="AM040264">
    <property type="protein sequence ID" value="CAJ11938.1"/>
    <property type="molecule type" value="Genomic_DNA"/>
</dbReference>
<dbReference type="RefSeq" id="WP_002965047.1">
    <property type="nucleotide sequence ID" value="NZ_KN046823.1"/>
</dbReference>
<dbReference type="SMR" id="Q2YR87"/>
<dbReference type="STRING" id="359391.BAB1_1982"/>
<dbReference type="GeneID" id="93017699"/>
<dbReference type="KEGG" id="bmf:BAB1_1982"/>
<dbReference type="PATRIC" id="fig|359391.11.peg.1220"/>
<dbReference type="HOGENOM" id="CLU_027272_2_3_5"/>
<dbReference type="PhylomeDB" id="Q2YR87"/>
<dbReference type="UniPathway" id="UPA00068">
    <property type="reaction ID" value="UER00114"/>
</dbReference>
<dbReference type="Proteomes" id="UP000002719">
    <property type="component" value="Chromosome I"/>
</dbReference>
<dbReference type="GO" id="GO:0005829">
    <property type="term" value="C:cytosol"/>
    <property type="evidence" value="ECO:0007669"/>
    <property type="project" value="TreeGrafter"/>
</dbReference>
<dbReference type="GO" id="GO:0004056">
    <property type="term" value="F:argininosuccinate lyase activity"/>
    <property type="evidence" value="ECO:0007669"/>
    <property type="project" value="UniProtKB-UniRule"/>
</dbReference>
<dbReference type="GO" id="GO:0042450">
    <property type="term" value="P:arginine biosynthetic process via ornithine"/>
    <property type="evidence" value="ECO:0007669"/>
    <property type="project" value="InterPro"/>
</dbReference>
<dbReference type="GO" id="GO:0006526">
    <property type="term" value="P:L-arginine biosynthetic process"/>
    <property type="evidence" value="ECO:0007669"/>
    <property type="project" value="UniProtKB-UniRule"/>
</dbReference>
<dbReference type="CDD" id="cd01359">
    <property type="entry name" value="Argininosuccinate_lyase"/>
    <property type="match status" value="1"/>
</dbReference>
<dbReference type="FunFam" id="1.10.275.10:FF:000002">
    <property type="entry name" value="Argininosuccinate lyase"/>
    <property type="match status" value="1"/>
</dbReference>
<dbReference type="FunFam" id="1.10.40.30:FF:000001">
    <property type="entry name" value="Argininosuccinate lyase"/>
    <property type="match status" value="1"/>
</dbReference>
<dbReference type="FunFam" id="1.20.200.10:FF:000015">
    <property type="entry name" value="argininosuccinate lyase isoform X2"/>
    <property type="match status" value="1"/>
</dbReference>
<dbReference type="Gene3D" id="1.10.40.30">
    <property type="entry name" value="Fumarase/aspartase (C-terminal domain)"/>
    <property type="match status" value="1"/>
</dbReference>
<dbReference type="Gene3D" id="1.20.200.10">
    <property type="entry name" value="Fumarase/aspartase (Central domain)"/>
    <property type="match status" value="1"/>
</dbReference>
<dbReference type="Gene3D" id="1.10.275.10">
    <property type="entry name" value="Fumarase/aspartase (N-terminal domain)"/>
    <property type="match status" value="1"/>
</dbReference>
<dbReference type="HAMAP" id="MF_00006">
    <property type="entry name" value="Arg_succ_lyase"/>
    <property type="match status" value="1"/>
</dbReference>
<dbReference type="InterPro" id="IPR029419">
    <property type="entry name" value="Arg_succ_lyase_C"/>
</dbReference>
<dbReference type="InterPro" id="IPR009049">
    <property type="entry name" value="Argininosuccinate_lyase"/>
</dbReference>
<dbReference type="InterPro" id="IPR024083">
    <property type="entry name" value="Fumarase/histidase_N"/>
</dbReference>
<dbReference type="InterPro" id="IPR020557">
    <property type="entry name" value="Fumarate_lyase_CS"/>
</dbReference>
<dbReference type="InterPro" id="IPR000362">
    <property type="entry name" value="Fumarate_lyase_fam"/>
</dbReference>
<dbReference type="InterPro" id="IPR022761">
    <property type="entry name" value="Fumarate_lyase_N"/>
</dbReference>
<dbReference type="InterPro" id="IPR008948">
    <property type="entry name" value="L-Aspartase-like"/>
</dbReference>
<dbReference type="NCBIfam" id="TIGR00838">
    <property type="entry name" value="argH"/>
    <property type="match status" value="1"/>
</dbReference>
<dbReference type="PANTHER" id="PTHR43814">
    <property type="entry name" value="ARGININOSUCCINATE LYASE"/>
    <property type="match status" value="1"/>
</dbReference>
<dbReference type="PANTHER" id="PTHR43814:SF1">
    <property type="entry name" value="ARGININOSUCCINATE LYASE"/>
    <property type="match status" value="1"/>
</dbReference>
<dbReference type="Pfam" id="PF14698">
    <property type="entry name" value="ASL_C2"/>
    <property type="match status" value="1"/>
</dbReference>
<dbReference type="Pfam" id="PF00206">
    <property type="entry name" value="Lyase_1"/>
    <property type="match status" value="1"/>
</dbReference>
<dbReference type="PRINTS" id="PR00145">
    <property type="entry name" value="ARGSUCLYASE"/>
</dbReference>
<dbReference type="PRINTS" id="PR00149">
    <property type="entry name" value="FUMRATELYASE"/>
</dbReference>
<dbReference type="SUPFAM" id="SSF48557">
    <property type="entry name" value="L-aspartase-like"/>
    <property type="match status" value="1"/>
</dbReference>
<dbReference type="PROSITE" id="PS00163">
    <property type="entry name" value="FUMARATE_LYASES"/>
    <property type="match status" value="1"/>
</dbReference>
<accession>Q2YR87</accession>
<keyword id="KW-0028">Amino-acid biosynthesis</keyword>
<keyword id="KW-0055">Arginine biosynthesis</keyword>
<keyword id="KW-0963">Cytoplasm</keyword>
<keyword id="KW-0456">Lyase</keyword>
<keyword id="KW-1185">Reference proteome</keyword>
<sequence length="466" mass="51267">MSEQKSSNQMWGGRFASGPDAIMEEINASIGFDRKLYAQDIQGSLAHAAMLAKTGIIAAEDHKQIENGLKTIRKEIEEGKFTFSRKLEDIHMNIEARLAELIGPAAGRLHTARSRNDQVAVDFRLWVKQELEKTAAALKNLIEAFLERAEEHAATVMPGFTHLQTAQPVTFGHHCMAYVEMFGRDLSRVRDAIERIDESPLGAAALAGTGFPIDRHMTAKALGFREPTRNSLDSVSDRDYALEFLSLAAICAGHLSRLAEEIVIWSTPQFNFVRLSDAFSTGSSIMPQKKNPDAAELVRAKTGRINGSLVALLTIMKGLPLAYSKDMQEDKEQVFDAAENLELAIAAMAGMVRDLTVNVAAMKKAAGSGYSTATDLADWLVRTLGLPFREAHHVTGRAVALAESRKVDLAKLSLEELQSINPAITAEVFGYLTVEKSVKSRQSFGGTAPQEVRRQIRYWKKRIAKA</sequence>
<protein>
    <recommendedName>
        <fullName evidence="1">Argininosuccinate lyase</fullName>
        <shortName evidence="1">ASAL</shortName>
        <ecNumber evidence="1">4.3.2.1</ecNumber>
    </recommendedName>
    <alternativeName>
        <fullName evidence="1">Arginosuccinase</fullName>
    </alternativeName>
</protein>